<organism>
    <name type="scientific">Limosilactobacillus fermentum (strain NBRC 3956 / LMG 18251)</name>
    <name type="common">Lactobacillus fermentum</name>
    <dbReference type="NCBI Taxonomy" id="334390"/>
    <lineage>
        <taxon>Bacteria</taxon>
        <taxon>Bacillati</taxon>
        <taxon>Bacillota</taxon>
        <taxon>Bacilli</taxon>
        <taxon>Lactobacillales</taxon>
        <taxon>Lactobacillaceae</taxon>
        <taxon>Limosilactobacillus</taxon>
    </lineage>
</organism>
<evidence type="ECO:0000255" key="1">
    <source>
        <dbReference type="HAMAP-Rule" id="MF_01201"/>
    </source>
</evidence>
<proteinExistence type="inferred from homology"/>
<protein>
    <recommendedName>
        <fullName evidence="1">Alanine racemase</fullName>
        <ecNumber evidence="1">5.1.1.1</ecNumber>
    </recommendedName>
</protein>
<sequence>MVSARLRKTDLVVDLKALGANVQRQREQLAPGSRILAVVKANAYGNGMVPVASALARAGVEGFCVALLDEAIELRDSGIQELVLVLGITPVEYAPLAAAQGISLTVGSLEWLKNYQRLAKEEGIKQPLKVHLALDTGMGRIGFTTPEDFKEALQLVAAPCFEFEGIFTHFATADEEDATYFERQRARFDDFMAVVTKRPPFVHVANSATGLWHQKSIVANTIRMGISMYGANPSGVGIKESFPLEPVTSLVTHATYVKQLKAGESVSYGATYTAKEDEWVATLPVGYADGYPRRMQGFYVLVDGQRCEVLGRVCMDQMMVRLPKEYPVGTEAVLMGRSLDQEITVTDVAEYAHTINYEILTGMGARLHRRYLG</sequence>
<name>ALR_LIMF3</name>
<keyword id="KW-0413">Isomerase</keyword>
<keyword id="KW-0663">Pyridoxal phosphate</keyword>
<keyword id="KW-1185">Reference proteome</keyword>
<dbReference type="EC" id="5.1.1.1" evidence="1"/>
<dbReference type="EMBL" id="AP008937">
    <property type="protein sequence ID" value="BAG26547.1"/>
    <property type="molecule type" value="Genomic_DNA"/>
</dbReference>
<dbReference type="RefSeq" id="WP_003684030.1">
    <property type="nucleotide sequence ID" value="NC_010610.1"/>
</dbReference>
<dbReference type="SMR" id="B2GA65"/>
<dbReference type="GeneID" id="83715474"/>
<dbReference type="KEGG" id="lfe:LAF_0211"/>
<dbReference type="eggNOG" id="COG0787">
    <property type="taxonomic scope" value="Bacteria"/>
</dbReference>
<dbReference type="HOGENOM" id="CLU_028393_2_1_9"/>
<dbReference type="UniPathway" id="UPA00042">
    <property type="reaction ID" value="UER00497"/>
</dbReference>
<dbReference type="Proteomes" id="UP000001697">
    <property type="component" value="Chromosome"/>
</dbReference>
<dbReference type="GO" id="GO:0005829">
    <property type="term" value="C:cytosol"/>
    <property type="evidence" value="ECO:0007669"/>
    <property type="project" value="TreeGrafter"/>
</dbReference>
<dbReference type="GO" id="GO:0008784">
    <property type="term" value="F:alanine racemase activity"/>
    <property type="evidence" value="ECO:0007669"/>
    <property type="project" value="UniProtKB-UniRule"/>
</dbReference>
<dbReference type="GO" id="GO:0030170">
    <property type="term" value="F:pyridoxal phosphate binding"/>
    <property type="evidence" value="ECO:0007669"/>
    <property type="project" value="UniProtKB-UniRule"/>
</dbReference>
<dbReference type="GO" id="GO:0030632">
    <property type="term" value="P:D-alanine biosynthetic process"/>
    <property type="evidence" value="ECO:0007669"/>
    <property type="project" value="UniProtKB-UniRule"/>
</dbReference>
<dbReference type="GO" id="GO:0009252">
    <property type="term" value="P:peptidoglycan biosynthetic process"/>
    <property type="evidence" value="ECO:0007669"/>
    <property type="project" value="TreeGrafter"/>
</dbReference>
<dbReference type="CDD" id="cd00430">
    <property type="entry name" value="PLPDE_III_AR"/>
    <property type="match status" value="1"/>
</dbReference>
<dbReference type="FunFam" id="2.40.37.10:FF:000006">
    <property type="entry name" value="Alanine racemase"/>
    <property type="match status" value="1"/>
</dbReference>
<dbReference type="FunFam" id="3.20.20.10:FF:000002">
    <property type="entry name" value="Alanine racemase"/>
    <property type="match status" value="1"/>
</dbReference>
<dbReference type="Gene3D" id="3.20.20.10">
    <property type="entry name" value="Alanine racemase"/>
    <property type="match status" value="1"/>
</dbReference>
<dbReference type="Gene3D" id="2.40.37.10">
    <property type="entry name" value="Lyase, Ornithine Decarboxylase, Chain A, domain 1"/>
    <property type="match status" value="1"/>
</dbReference>
<dbReference type="HAMAP" id="MF_01201">
    <property type="entry name" value="Ala_racemase"/>
    <property type="match status" value="1"/>
</dbReference>
<dbReference type="InterPro" id="IPR000821">
    <property type="entry name" value="Ala_racemase"/>
</dbReference>
<dbReference type="InterPro" id="IPR009006">
    <property type="entry name" value="Ala_racemase/Decarboxylase_C"/>
</dbReference>
<dbReference type="InterPro" id="IPR011079">
    <property type="entry name" value="Ala_racemase_C"/>
</dbReference>
<dbReference type="InterPro" id="IPR001608">
    <property type="entry name" value="Ala_racemase_N"/>
</dbReference>
<dbReference type="InterPro" id="IPR020622">
    <property type="entry name" value="Ala_racemase_pyridoxalP-BS"/>
</dbReference>
<dbReference type="InterPro" id="IPR029066">
    <property type="entry name" value="PLP-binding_barrel"/>
</dbReference>
<dbReference type="NCBIfam" id="TIGR00492">
    <property type="entry name" value="alr"/>
    <property type="match status" value="1"/>
</dbReference>
<dbReference type="PANTHER" id="PTHR30511">
    <property type="entry name" value="ALANINE RACEMASE"/>
    <property type="match status" value="1"/>
</dbReference>
<dbReference type="PANTHER" id="PTHR30511:SF0">
    <property type="entry name" value="ALANINE RACEMASE, CATABOLIC-RELATED"/>
    <property type="match status" value="1"/>
</dbReference>
<dbReference type="Pfam" id="PF00842">
    <property type="entry name" value="Ala_racemase_C"/>
    <property type="match status" value="1"/>
</dbReference>
<dbReference type="Pfam" id="PF01168">
    <property type="entry name" value="Ala_racemase_N"/>
    <property type="match status" value="1"/>
</dbReference>
<dbReference type="PRINTS" id="PR00992">
    <property type="entry name" value="ALARACEMASE"/>
</dbReference>
<dbReference type="SMART" id="SM01005">
    <property type="entry name" value="Ala_racemase_C"/>
    <property type="match status" value="1"/>
</dbReference>
<dbReference type="SUPFAM" id="SSF50621">
    <property type="entry name" value="Alanine racemase C-terminal domain-like"/>
    <property type="match status" value="1"/>
</dbReference>
<dbReference type="SUPFAM" id="SSF51419">
    <property type="entry name" value="PLP-binding barrel"/>
    <property type="match status" value="1"/>
</dbReference>
<dbReference type="PROSITE" id="PS00395">
    <property type="entry name" value="ALANINE_RACEMASE"/>
    <property type="match status" value="1"/>
</dbReference>
<feature type="chain" id="PRO_1000138606" description="Alanine racemase">
    <location>
        <begin position="1"/>
        <end position="373"/>
    </location>
</feature>
<feature type="active site" description="Proton acceptor; specific for D-alanine" evidence="1">
    <location>
        <position position="40"/>
    </location>
</feature>
<feature type="active site" description="Proton acceptor; specific for L-alanine" evidence="1">
    <location>
        <position position="268"/>
    </location>
</feature>
<feature type="binding site" evidence="1">
    <location>
        <position position="140"/>
    </location>
    <ligand>
        <name>substrate</name>
    </ligand>
</feature>
<feature type="binding site" evidence="1">
    <location>
        <position position="315"/>
    </location>
    <ligand>
        <name>substrate</name>
    </ligand>
</feature>
<feature type="modified residue" description="N6-(pyridoxal phosphate)lysine" evidence="1">
    <location>
        <position position="40"/>
    </location>
</feature>
<accession>B2GA65</accession>
<comment type="function">
    <text evidence="1">Catalyzes the interconversion of L-alanine and D-alanine. May also act on other amino acids.</text>
</comment>
<comment type="catalytic activity">
    <reaction evidence="1">
        <text>L-alanine = D-alanine</text>
        <dbReference type="Rhea" id="RHEA:20249"/>
        <dbReference type="ChEBI" id="CHEBI:57416"/>
        <dbReference type="ChEBI" id="CHEBI:57972"/>
        <dbReference type="EC" id="5.1.1.1"/>
    </reaction>
</comment>
<comment type="cofactor">
    <cofactor evidence="1">
        <name>pyridoxal 5'-phosphate</name>
        <dbReference type="ChEBI" id="CHEBI:597326"/>
    </cofactor>
</comment>
<comment type="pathway">
    <text evidence="1">Amino-acid biosynthesis; D-alanine biosynthesis; D-alanine from L-alanine: step 1/1.</text>
</comment>
<comment type="similarity">
    <text evidence="1">Belongs to the alanine racemase family.</text>
</comment>
<reference key="1">
    <citation type="journal article" date="2008" name="DNA Res.">
        <title>Comparative genome analysis of Lactobacillus reuteri and Lactobacillus fermentum reveal a genomic island for reuterin and cobalamin production.</title>
        <authorList>
            <person name="Morita H."/>
            <person name="Toh H."/>
            <person name="Fukuda S."/>
            <person name="Horikawa H."/>
            <person name="Oshima K."/>
            <person name="Suzuki T."/>
            <person name="Murakami M."/>
            <person name="Hisamatsu S."/>
            <person name="Kato Y."/>
            <person name="Takizawa T."/>
            <person name="Fukuoka H."/>
            <person name="Yoshimura T."/>
            <person name="Itoh K."/>
            <person name="O'Sullivan D.J."/>
            <person name="McKay L.L."/>
            <person name="Ohno H."/>
            <person name="Kikuchi J."/>
            <person name="Masaoka T."/>
            <person name="Hattori M."/>
        </authorList>
    </citation>
    <scope>NUCLEOTIDE SEQUENCE [LARGE SCALE GENOMIC DNA]</scope>
    <source>
        <strain>NBRC 3956 / LMG 18251</strain>
    </source>
</reference>
<gene>
    <name type="primary">alr</name>
    <name type="ordered locus">LAF_0211</name>
</gene>